<protein>
    <recommendedName>
        <fullName evidence="1">Gamma-glutamyl phosphate reductase</fullName>
        <shortName evidence="1">GPR</shortName>
        <ecNumber evidence="1">1.2.1.41</ecNumber>
    </recommendedName>
    <alternativeName>
        <fullName evidence="1">Glutamate-5-semialdehyde dehydrogenase</fullName>
    </alternativeName>
    <alternativeName>
        <fullName evidence="1">Glutamyl-gamma-semialdehyde dehydrogenase</fullName>
        <shortName evidence="1">GSA dehydrogenase</shortName>
    </alternativeName>
</protein>
<comment type="function">
    <text evidence="1">Catalyzes the NADPH-dependent reduction of L-glutamate 5-phosphate into L-glutamate 5-semialdehyde and phosphate. The product spontaneously undergoes cyclization to form 1-pyrroline-5-carboxylate.</text>
</comment>
<comment type="catalytic activity">
    <reaction evidence="1">
        <text>L-glutamate 5-semialdehyde + phosphate + NADP(+) = L-glutamyl 5-phosphate + NADPH + H(+)</text>
        <dbReference type="Rhea" id="RHEA:19541"/>
        <dbReference type="ChEBI" id="CHEBI:15378"/>
        <dbReference type="ChEBI" id="CHEBI:43474"/>
        <dbReference type="ChEBI" id="CHEBI:57783"/>
        <dbReference type="ChEBI" id="CHEBI:58066"/>
        <dbReference type="ChEBI" id="CHEBI:58274"/>
        <dbReference type="ChEBI" id="CHEBI:58349"/>
        <dbReference type="EC" id="1.2.1.41"/>
    </reaction>
</comment>
<comment type="pathway">
    <text evidence="1">Amino-acid biosynthesis; L-proline biosynthesis; L-glutamate 5-semialdehyde from L-glutamate: step 2/2.</text>
</comment>
<comment type="subcellular location">
    <subcellularLocation>
        <location evidence="1">Cytoplasm</location>
    </subcellularLocation>
</comment>
<comment type="similarity">
    <text evidence="1">Belongs to the gamma-glutamyl phosphate reductase family.</text>
</comment>
<proteinExistence type="inferred from homology"/>
<gene>
    <name evidence="1" type="primary">proA</name>
    <name type="ordered locus">HS_0408</name>
</gene>
<feature type="chain" id="PRO_0000340882" description="Gamma-glutamyl phosphate reductase">
    <location>
        <begin position="1"/>
        <end position="418"/>
    </location>
</feature>
<accession>Q0I2E5</accession>
<sequence>MNLKEMGKNAKQAATILAQLSQQQKNTALQIIAEQLELQSNKILVENAKDIQLAKENGLSDAIIDRLLLTKERINSIANDVRHIISLPDPIGQIIDGGILESGTKLERVRVPLGVIGVIYEARPNVTVDVATLCLKTGNAVILRGGKETSYSNKILVTVIQDALEQTGLPKNAVQAITDPDRNFVLELLKLDKYVDMIIPRGGAGLHEFCKQNSTIPVIIGGVGVCHVFVEESAEQDKALAVIDNAKTQRPSTCNTLETLLVQESIATEFLPKLVAHLKHKNVKYHADPTALSILEKQNAEVSIVQEQQLRQEWGSLDLNVVIVKDIQQAIAHITEYGTQHSEAILTSSPRLAHQFVSLVDAAAVYVNASTRFTDGGQFGLGAEVAVSTQKLHARGPMGLEALTTYKWVCSGDYTVRQ</sequence>
<dbReference type="EC" id="1.2.1.41" evidence="1"/>
<dbReference type="EMBL" id="CP000436">
    <property type="protein sequence ID" value="ABI24686.1"/>
    <property type="molecule type" value="Genomic_DNA"/>
</dbReference>
<dbReference type="SMR" id="Q0I2E5"/>
<dbReference type="KEGG" id="hso:HS_0408"/>
<dbReference type="eggNOG" id="COG0014">
    <property type="taxonomic scope" value="Bacteria"/>
</dbReference>
<dbReference type="HOGENOM" id="CLU_030231_0_0_6"/>
<dbReference type="UniPathway" id="UPA00098">
    <property type="reaction ID" value="UER00360"/>
</dbReference>
<dbReference type="GO" id="GO:0005737">
    <property type="term" value="C:cytoplasm"/>
    <property type="evidence" value="ECO:0007669"/>
    <property type="project" value="UniProtKB-SubCell"/>
</dbReference>
<dbReference type="GO" id="GO:0004350">
    <property type="term" value="F:glutamate-5-semialdehyde dehydrogenase activity"/>
    <property type="evidence" value="ECO:0007669"/>
    <property type="project" value="UniProtKB-UniRule"/>
</dbReference>
<dbReference type="GO" id="GO:0050661">
    <property type="term" value="F:NADP binding"/>
    <property type="evidence" value="ECO:0007669"/>
    <property type="project" value="InterPro"/>
</dbReference>
<dbReference type="GO" id="GO:0055129">
    <property type="term" value="P:L-proline biosynthetic process"/>
    <property type="evidence" value="ECO:0007669"/>
    <property type="project" value="UniProtKB-UniRule"/>
</dbReference>
<dbReference type="CDD" id="cd07079">
    <property type="entry name" value="ALDH_F18-19_ProA-GPR"/>
    <property type="match status" value="1"/>
</dbReference>
<dbReference type="FunFam" id="3.40.309.10:FF:000028">
    <property type="entry name" value="Gamma-glutamyl phosphate reductase"/>
    <property type="match status" value="1"/>
</dbReference>
<dbReference type="Gene3D" id="3.40.605.10">
    <property type="entry name" value="Aldehyde Dehydrogenase, Chain A, domain 1"/>
    <property type="match status" value="1"/>
</dbReference>
<dbReference type="Gene3D" id="3.40.309.10">
    <property type="entry name" value="Aldehyde Dehydrogenase, Chain A, domain 2"/>
    <property type="match status" value="1"/>
</dbReference>
<dbReference type="HAMAP" id="MF_00412">
    <property type="entry name" value="ProA"/>
    <property type="match status" value="1"/>
</dbReference>
<dbReference type="InterPro" id="IPR016161">
    <property type="entry name" value="Ald_DH/histidinol_DH"/>
</dbReference>
<dbReference type="InterPro" id="IPR016163">
    <property type="entry name" value="Ald_DH_C"/>
</dbReference>
<dbReference type="InterPro" id="IPR016162">
    <property type="entry name" value="Ald_DH_N"/>
</dbReference>
<dbReference type="InterPro" id="IPR015590">
    <property type="entry name" value="Aldehyde_DH_dom"/>
</dbReference>
<dbReference type="InterPro" id="IPR020593">
    <property type="entry name" value="G-glutamylP_reductase_CS"/>
</dbReference>
<dbReference type="InterPro" id="IPR012134">
    <property type="entry name" value="Glu-5-SA_DH"/>
</dbReference>
<dbReference type="InterPro" id="IPR000965">
    <property type="entry name" value="GPR_dom"/>
</dbReference>
<dbReference type="NCBIfam" id="NF001221">
    <property type="entry name" value="PRK00197.1"/>
    <property type="match status" value="1"/>
</dbReference>
<dbReference type="NCBIfam" id="TIGR00407">
    <property type="entry name" value="proA"/>
    <property type="match status" value="1"/>
</dbReference>
<dbReference type="PANTHER" id="PTHR11063:SF8">
    <property type="entry name" value="DELTA-1-PYRROLINE-5-CARBOXYLATE SYNTHASE"/>
    <property type="match status" value="1"/>
</dbReference>
<dbReference type="PANTHER" id="PTHR11063">
    <property type="entry name" value="GLUTAMATE SEMIALDEHYDE DEHYDROGENASE"/>
    <property type="match status" value="1"/>
</dbReference>
<dbReference type="Pfam" id="PF00171">
    <property type="entry name" value="Aldedh"/>
    <property type="match status" value="1"/>
</dbReference>
<dbReference type="PIRSF" id="PIRSF000151">
    <property type="entry name" value="GPR"/>
    <property type="match status" value="1"/>
</dbReference>
<dbReference type="SUPFAM" id="SSF53720">
    <property type="entry name" value="ALDH-like"/>
    <property type="match status" value="1"/>
</dbReference>
<dbReference type="PROSITE" id="PS01223">
    <property type="entry name" value="PROA"/>
    <property type="match status" value="1"/>
</dbReference>
<reference key="1">
    <citation type="journal article" date="2007" name="J. Bacteriol.">
        <title>Complete genome sequence of Haemophilus somnus (Histophilus somni) strain 129Pt and comparison to Haemophilus ducreyi 35000HP and Haemophilus influenzae Rd.</title>
        <authorList>
            <person name="Challacombe J.F."/>
            <person name="Duncan A.J."/>
            <person name="Brettin T.S."/>
            <person name="Bruce D."/>
            <person name="Chertkov O."/>
            <person name="Detter J.C."/>
            <person name="Han C.S."/>
            <person name="Misra M."/>
            <person name="Richardson P."/>
            <person name="Tapia R."/>
            <person name="Thayer N."/>
            <person name="Xie G."/>
            <person name="Inzana T.J."/>
        </authorList>
    </citation>
    <scope>NUCLEOTIDE SEQUENCE [LARGE SCALE GENOMIC DNA]</scope>
    <source>
        <strain>129Pt</strain>
    </source>
</reference>
<name>PROA_HISS1</name>
<organism>
    <name type="scientific">Histophilus somni (strain 129Pt)</name>
    <name type="common">Haemophilus somnus</name>
    <dbReference type="NCBI Taxonomy" id="205914"/>
    <lineage>
        <taxon>Bacteria</taxon>
        <taxon>Pseudomonadati</taxon>
        <taxon>Pseudomonadota</taxon>
        <taxon>Gammaproteobacteria</taxon>
        <taxon>Pasteurellales</taxon>
        <taxon>Pasteurellaceae</taxon>
        <taxon>Histophilus</taxon>
    </lineage>
</organism>
<evidence type="ECO:0000255" key="1">
    <source>
        <dbReference type="HAMAP-Rule" id="MF_00412"/>
    </source>
</evidence>
<keyword id="KW-0028">Amino-acid biosynthesis</keyword>
<keyword id="KW-0963">Cytoplasm</keyword>
<keyword id="KW-0521">NADP</keyword>
<keyword id="KW-0560">Oxidoreductase</keyword>
<keyword id="KW-0641">Proline biosynthesis</keyword>